<reference evidence="11" key="1">
    <citation type="journal article" date="2004" name="Nature">
        <title>Genome sequence of the Brown Norway rat yields insights into mammalian evolution.</title>
        <authorList>
            <person name="Gibbs R.A."/>
            <person name="Weinstock G.M."/>
            <person name="Metzker M.L."/>
            <person name="Muzny D.M."/>
            <person name="Sodergren E.J."/>
            <person name="Scherer S."/>
            <person name="Scott G."/>
            <person name="Steffen D."/>
            <person name="Worley K.C."/>
            <person name="Burch P.E."/>
            <person name="Okwuonu G."/>
            <person name="Hines S."/>
            <person name="Lewis L."/>
            <person name="Deramo C."/>
            <person name="Delgado O."/>
            <person name="Dugan-Rocha S."/>
            <person name="Miner G."/>
            <person name="Morgan M."/>
            <person name="Hawes A."/>
            <person name="Gill R."/>
            <person name="Holt R.A."/>
            <person name="Adams M.D."/>
            <person name="Amanatides P.G."/>
            <person name="Baden-Tillson H."/>
            <person name="Barnstead M."/>
            <person name="Chin S."/>
            <person name="Evans C.A."/>
            <person name="Ferriera S."/>
            <person name="Fosler C."/>
            <person name="Glodek A."/>
            <person name="Gu Z."/>
            <person name="Jennings D."/>
            <person name="Kraft C.L."/>
            <person name="Nguyen T."/>
            <person name="Pfannkoch C.M."/>
            <person name="Sitter C."/>
            <person name="Sutton G.G."/>
            <person name="Venter J.C."/>
            <person name="Woodage T."/>
            <person name="Smith D."/>
            <person name="Lee H.-M."/>
            <person name="Gustafson E."/>
            <person name="Cahill P."/>
            <person name="Kana A."/>
            <person name="Doucette-Stamm L."/>
            <person name="Weinstock K."/>
            <person name="Fechtel K."/>
            <person name="Weiss R.B."/>
            <person name="Dunn D.M."/>
            <person name="Green E.D."/>
            <person name="Blakesley R.W."/>
            <person name="Bouffard G.G."/>
            <person name="De Jong P.J."/>
            <person name="Osoegawa K."/>
            <person name="Zhu B."/>
            <person name="Marra M."/>
            <person name="Schein J."/>
            <person name="Bosdet I."/>
            <person name="Fjell C."/>
            <person name="Jones S."/>
            <person name="Krzywinski M."/>
            <person name="Mathewson C."/>
            <person name="Siddiqui A."/>
            <person name="Wye N."/>
            <person name="McPherson J."/>
            <person name="Zhao S."/>
            <person name="Fraser C.M."/>
            <person name="Shetty J."/>
            <person name="Shatsman S."/>
            <person name="Geer K."/>
            <person name="Chen Y."/>
            <person name="Abramzon S."/>
            <person name="Nierman W.C."/>
            <person name="Havlak P.H."/>
            <person name="Chen R."/>
            <person name="Durbin K.J."/>
            <person name="Egan A."/>
            <person name="Ren Y."/>
            <person name="Song X.-Z."/>
            <person name="Li B."/>
            <person name="Liu Y."/>
            <person name="Qin X."/>
            <person name="Cawley S."/>
            <person name="Cooney A.J."/>
            <person name="D'Souza L.M."/>
            <person name="Martin K."/>
            <person name="Wu J.Q."/>
            <person name="Gonzalez-Garay M.L."/>
            <person name="Jackson A.R."/>
            <person name="Kalafus K.J."/>
            <person name="McLeod M.P."/>
            <person name="Milosavljevic A."/>
            <person name="Virk D."/>
            <person name="Volkov A."/>
            <person name="Wheeler D.A."/>
            <person name="Zhang Z."/>
            <person name="Bailey J.A."/>
            <person name="Eichler E.E."/>
            <person name="Tuzun E."/>
            <person name="Birney E."/>
            <person name="Mongin E."/>
            <person name="Ureta-Vidal A."/>
            <person name="Woodwark C."/>
            <person name="Zdobnov E."/>
            <person name="Bork P."/>
            <person name="Suyama M."/>
            <person name="Torrents D."/>
            <person name="Alexandersson M."/>
            <person name="Trask B.J."/>
            <person name="Young J.M."/>
            <person name="Huang H."/>
            <person name="Wang H."/>
            <person name="Xing H."/>
            <person name="Daniels S."/>
            <person name="Gietzen D."/>
            <person name="Schmidt J."/>
            <person name="Stevens K."/>
            <person name="Vitt U."/>
            <person name="Wingrove J."/>
            <person name="Camara F."/>
            <person name="Mar Alba M."/>
            <person name="Abril J.F."/>
            <person name="Guigo R."/>
            <person name="Smit A."/>
            <person name="Dubchak I."/>
            <person name="Rubin E.M."/>
            <person name="Couronne O."/>
            <person name="Poliakov A."/>
            <person name="Huebner N."/>
            <person name="Ganten D."/>
            <person name="Goesele C."/>
            <person name="Hummel O."/>
            <person name="Kreitler T."/>
            <person name="Lee Y.-A."/>
            <person name="Monti J."/>
            <person name="Schulz H."/>
            <person name="Zimdahl H."/>
            <person name="Himmelbauer H."/>
            <person name="Lehrach H."/>
            <person name="Jacob H.J."/>
            <person name="Bromberg S."/>
            <person name="Gullings-Handley J."/>
            <person name="Jensen-Seaman M.I."/>
            <person name="Kwitek A.E."/>
            <person name="Lazar J."/>
            <person name="Pasko D."/>
            <person name="Tonellato P.J."/>
            <person name="Twigger S."/>
            <person name="Ponting C.P."/>
            <person name="Duarte J.M."/>
            <person name="Rice S."/>
            <person name="Goodstadt L."/>
            <person name="Beatson S.A."/>
            <person name="Emes R.D."/>
            <person name="Winter E.E."/>
            <person name="Webber C."/>
            <person name="Brandt P."/>
            <person name="Nyakatura G."/>
            <person name="Adetobi M."/>
            <person name="Chiaromonte F."/>
            <person name="Elnitski L."/>
            <person name="Eswara P."/>
            <person name="Hardison R.C."/>
            <person name="Hou M."/>
            <person name="Kolbe D."/>
            <person name="Makova K."/>
            <person name="Miller W."/>
            <person name="Nekrutenko A."/>
            <person name="Riemer C."/>
            <person name="Schwartz S."/>
            <person name="Taylor J."/>
            <person name="Yang S."/>
            <person name="Zhang Y."/>
            <person name="Lindpaintner K."/>
            <person name="Andrews T.D."/>
            <person name="Caccamo M."/>
            <person name="Clamp M."/>
            <person name="Clarke L."/>
            <person name="Curwen V."/>
            <person name="Durbin R.M."/>
            <person name="Eyras E."/>
            <person name="Searle S.M."/>
            <person name="Cooper G.M."/>
            <person name="Batzoglou S."/>
            <person name="Brudno M."/>
            <person name="Sidow A."/>
            <person name="Stone E.A."/>
            <person name="Payseur B.A."/>
            <person name="Bourque G."/>
            <person name="Lopez-Otin C."/>
            <person name="Puente X.S."/>
            <person name="Chakrabarti K."/>
            <person name="Chatterji S."/>
            <person name="Dewey C."/>
            <person name="Pachter L."/>
            <person name="Bray N."/>
            <person name="Yap V.B."/>
            <person name="Caspi A."/>
            <person name="Tesler G."/>
            <person name="Pevzner P.A."/>
            <person name="Haussler D."/>
            <person name="Roskin K.M."/>
            <person name="Baertsch R."/>
            <person name="Clawson H."/>
            <person name="Furey T.S."/>
            <person name="Hinrichs A.S."/>
            <person name="Karolchik D."/>
            <person name="Kent W.J."/>
            <person name="Rosenbloom K.R."/>
            <person name="Trumbower H."/>
            <person name="Weirauch M."/>
            <person name="Cooper D.N."/>
            <person name="Stenson P.D."/>
            <person name="Ma B."/>
            <person name="Brent M."/>
            <person name="Arumugam M."/>
            <person name="Shteynberg D."/>
            <person name="Copley R.R."/>
            <person name="Taylor M.S."/>
            <person name="Riethman H."/>
            <person name="Mudunuri U."/>
            <person name="Peterson J."/>
            <person name="Guyer M."/>
            <person name="Felsenfeld A."/>
            <person name="Old S."/>
            <person name="Mockrin S."/>
            <person name="Collins F.S."/>
        </authorList>
    </citation>
    <scope>NUCLEOTIDE SEQUENCE [LARGE SCALE GENOMIC DNA]</scope>
    <source>
        <strain evidence="7">Brown Norway</strain>
    </source>
</reference>
<reference evidence="11 12" key="2">
    <citation type="submission" date="1999-06" db="EMBL/GenBank/DDBJ databases">
        <title>Rat kinesin probes to use for Northern blot analysis.</title>
        <authorList>
            <person name="Gould R.M."/>
            <person name="Freund C.M."/>
            <person name="Hawkins G.A."/>
        </authorList>
    </citation>
    <scope>NUCLEOTIDE SEQUENCE [MRNA] OF 497-705 (ISOFORM 2)</scope>
    <source>
        <tissue evidence="12">Brain</tissue>
    </source>
</reference>
<reference evidence="11 13" key="3">
    <citation type="journal article" date="2004" name="Genome Res.">
        <title>The status, quality, and expansion of the NIH full-length cDNA project: the Mammalian Gene Collection (MGC).</title>
        <authorList>
            <consortium name="The MGC Project Team"/>
        </authorList>
    </citation>
    <scope>NUCLEOTIDE SEQUENCE [LARGE SCALE MRNA] OF 502-705 (ISOFORM 1)</scope>
    <source>
        <tissue evidence="13">Ovary</tissue>
    </source>
</reference>
<reference key="4">
    <citation type="journal article" date="2012" name="Nat. Commun.">
        <title>Quantitative maps of protein phosphorylation sites across 14 different rat organs and tissues.</title>
        <authorList>
            <person name="Lundby A."/>
            <person name="Secher A."/>
            <person name="Lage K."/>
            <person name="Nordsborg N.B."/>
            <person name="Dmytriyev A."/>
            <person name="Lundby C."/>
            <person name="Olsen J.V."/>
        </authorList>
    </citation>
    <scope>PHOSPHORYLATION [LARGE SCALE ANALYSIS] AT SER-75</scope>
    <scope>PHOSPHORYLATION [LARGE SCALE ANALYSIS] AT SER-572 (ISOFORM 2)</scope>
    <scope>IDENTIFICATION BY MASS SPECTROMETRY [LARGE SCALE ANALYSIS]</scope>
</reference>
<sequence length="705" mass="79792">MATANFGKIQIGIYVEIKRSDGRIHQAMVTSLNEDNESVTVEWIENGDTKGKEIDLESIFSLNPDLVPDEDIEPSPEIPPPSSSSKVNKIVKNRRTVASIKNDPPPRDNRVVGSARARPSQLPEQSSSAQQNGSVSDISPVQAAKKEFGPPSRRKSNCVKEVEKLQEKREKRRLQQQELREKRAQDVDATNPNYEIMCMIRDFRGSLDYRPLTTADPIDEHRICVCVRKRPLNKKETQMKDLDVITIPSKDVVMVHEPKQKVDLTRYLENQTFRFDYAFDDSAPNEMVYRFTARPLVETIFERGMATCFAYGQTGSGKTHTMGGDCSGKNQDCSKGIYALAARDVFLMLKKPNYKKLELQVYATFFEIYSGKVFDLLNRKTKLRVLEDGKQQVQVVGLQEREVKCVEDVLKLIDIGNSCRTSGQTSANAHSSRSHAVFQIILRRKGKLHGKFSLIDLAGNERGADTSSADRQTRLEGAEINKSLLALKECIRALGRNKPHTPFRASKLTQVLRDSFIGENSRTCMIATISPGMASCENTLNTLRYANRVKELTVDPTAAGDVRPIMHHPPSQIDDLETQWGVGSSPQRDDLKLLCEQNEEEVSPQLFTFHEAVSQMVEMEEQVVEDHRAVFQESIRWIEDEKALLEMTEEVDYDVDSYATQLEAILEQKIDILTELRDKVKSFRAALQEEEQASKQINPKRPRAL</sequence>
<evidence type="ECO:0000250" key="1"/>
<evidence type="ECO:0000250" key="2">
    <source>
        <dbReference type="UniProtKB" id="O00139"/>
    </source>
</evidence>
<evidence type="ECO:0000250" key="3">
    <source>
        <dbReference type="UniProtKB" id="P28740"/>
    </source>
</evidence>
<evidence type="ECO:0000255" key="4"/>
<evidence type="ECO:0000255" key="5">
    <source>
        <dbReference type="PROSITE-ProRule" id="PRU00283"/>
    </source>
</evidence>
<evidence type="ECO:0000256" key="6">
    <source>
        <dbReference type="SAM" id="MobiDB-lite"/>
    </source>
</evidence>
<evidence type="ECO:0000269" key="7">
    <source>
    </source>
</evidence>
<evidence type="ECO:0000269" key="8">
    <source>
    </source>
</evidence>
<evidence type="ECO:0000269" key="9">
    <source ref="2"/>
</evidence>
<evidence type="ECO:0000303" key="10">
    <source ref="2"/>
</evidence>
<evidence type="ECO:0000305" key="11"/>
<evidence type="ECO:0000312" key="12">
    <source>
        <dbReference type="EMBL" id="AAD39241.1"/>
    </source>
</evidence>
<evidence type="ECO:0000312" key="13">
    <source>
        <dbReference type="EMBL" id="AAH91304.1"/>
    </source>
</evidence>
<evidence type="ECO:0000312" key="14">
    <source>
        <dbReference type="RGD" id="70974"/>
    </source>
</evidence>
<evidence type="ECO:0007744" key="15">
    <source>
    </source>
</evidence>
<comment type="function">
    <text evidence="2">Plus end-directed microtubule-dependent motor required for normal brain development. May regulate microtubule dynamics during axonal growth. Required for normal progression through mitosis. Required for normal congress of chromosomes at the metaphase plate. Required for normal spindle dynamics during mitosis. Promotes spindle turnover. Implicated in formation of bipolar mitotic spindles. Has microtubule depolymerization activity (By similarity).</text>
</comment>
<comment type="subunit">
    <text evidence="2">Interacts with AURKA and PLK1. Interacts with PSRC1. Interacts with MCRS1; the interaction enhances recruitment of KIF2A to the minus ends of spindle microtubules which promotes chromosome alignment.</text>
</comment>
<comment type="subcellular location">
    <subcellularLocation>
        <location evidence="3">Cytoplasm</location>
    </subcellularLocation>
    <subcellularLocation>
        <location evidence="3">Cytoplasm</location>
        <location evidence="3">Cytoskeleton</location>
        <location evidence="3">Microtubule organizing center</location>
        <location evidence="3">Centrosome</location>
    </subcellularLocation>
    <subcellularLocation>
        <location evidence="1">Cytoplasm</location>
        <location evidence="1">Cytoskeleton</location>
        <location evidence="1">Spindle pole</location>
    </subcellularLocation>
    <subcellularLocation>
        <location evidence="1">Cytoplasm</location>
        <location evidence="1">Cytoskeleton</location>
        <location evidence="1">Spindle</location>
    </subcellularLocation>
    <text evidence="1">Localized to the spindle microtubules and spindle poles from prophase to metaphase. Efficient targeting to spindle microtubules and spindle poles requires the kinase activity of PLK1. Recruited to mitotic spindles by interaction with PSRC1 (By similarity).</text>
</comment>
<comment type="alternative products">
    <event type="alternative splicing"/>
    <isoform>
        <id>Q9WV63-1</id>
        <name evidence="8">1</name>
        <sequence type="displayed"/>
    </isoform>
    <isoform>
        <id>Q9WV63-2</id>
        <name evidence="9">2</name>
        <sequence type="described" ref="VSP_052553"/>
    </isoform>
</comment>
<comment type="miscellaneous">
    <molecule>Isoform 1</molecule>
    <text evidence="11">Incomplete sequence.</text>
</comment>
<comment type="miscellaneous">
    <molecule>Isoform 2</molecule>
    <text evidence="11">Incomplete sequence.</text>
</comment>
<comment type="similarity">
    <text evidence="5">Belongs to the TRAFAC class myosin-kinesin ATPase superfamily. Kinesin family. MCAK/KIF2 subfamily.</text>
</comment>
<accession>Q9WV63</accession>
<accession>Q5BJW1</accession>
<protein>
    <recommendedName>
        <fullName>Kinesin-like protein KIF2A</fullName>
    </recommendedName>
    <alternativeName>
        <fullName>Kinesin-2</fullName>
    </alternativeName>
</protein>
<name>KIF2A_RAT</name>
<dbReference type="EMBL" id="AC105687">
    <property type="status" value="NOT_ANNOTATED_CDS"/>
    <property type="molecule type" value="Genomic_DNA"/>
</dbReference>
<dbReference type="EMBL" id="AF155824">
    <property type="protein sequence ID" value="AAD39241.1"/>
    <property type="molecule type" value="mRNA"/>
</dbReference>
<dbReference type="EMBL" id="BC091304">
    <property type="protein sequence ID" value="AAH91304.1"/>
    <property type="molecule type" value="mRNA"/>
</dbReference>
<dbReference type="SMR" id="Q9WV63"/>
<dbReference type="FunCoup" id="Q9WV63">
    <property type="interactions" value="3853"/>
</dbReference>
<dbReference type="IntAct" id="Q9WV63">
    <property type="interactions" value="2"/>
</dbReference>
<dbReference type="MINT" id="Q9WV63"/>
<dbReference type="STRING" id="10116.ENSRNOP00000019189"/>
<dbReference type="GlyGen" id="Q9WV63">
    <property type="glycosylation" value="1 site"/>
</dbReference>
<dbReference type="iPTMnet" id="Q9WV63"/>
<dbReference type="PhosphoSitePlus" id="Q9WV63"/>
<dbReference type="PaxDb" id="10116-ENSRNOP00000019225"/>
<dbReference type="AGR" id="RGD:70974"/>
<dbReference type="RGD" id="70974">
    <property type="gene designation" value="Kif2a"/>
</dbReference>
<dbReference type="eggNOG" id="KOG0246">
    <property type="taxonomic scope" value="Eukaryota"/>
</dbReference>
<dbReference type="InParanoid" id="Q9WV63"/>
<dbReference type="PhylomeDB" id="Q9WV63"/>
<dbReference type="Reactome" id="R-RNO-141444">
    <property type="pathway name" value="Amplification of signal from unattached kinetochores via a MAD2 inhibitory signal"/>
</dbReference>
<dbReference type="Reactome" id="R-RNO-2132295">
    <property type="pathway name" value="MHC class II antigen presentation"/>
</dbReference>
<dbReference type="Reactome" id="R-RNO-2467813">
    <property type="pathway name" value="Separation of Sister Chromatids"/>
</dbReference>
<dbReference type="Reactome" id="R-RNO-2500257">
    <property type="pathway name" value="Resolution of Sister Chromatid Cohesion"/>
</dbReference>
<dbReference type="Reactome" id="R-RNO-5663220">
    <property type="pathway name" value="RHO GTPases Activate Formins"/>
</dbReference>
<dbReference type="Reactome" id="R-RNO-6811434">
    <property type="pathway name" value="COPI-dependent Golgi-to-ER retrograde traffic"/>
</dbReference>
<dbReference type="Reactome" id="R-RNO-68877">
    <property type="pathway name" value="Mitotic Prometaphase"/>
</dbReference>
<dbReference type="Reactome" id="R-RNO-9648025">
    <property type="pathway name" value="EML4 and NUDC in mitotic spindle formation"/>
</dbReference>
<dbReference type="Reactome" id="R-RNO-983189">
    <property type="pathway name" value="Kinesins"/>
</dbReference>
<dbReference type="PRO" id="PR:Q9WV63"/>
<dbReference type="Proteomes" id="UP000002494">
    <property type="component" value="Unplaced"/>
</dbReference>
<dbReference type="GO" id="GO:1904115">
    <property type="term" value="C:axon cytoplasm"/>
    <property type="evidence" value="ECO:0007669"/>
    <property type="project" value="GOC"/>
</dbReference>
<dbReference type="GO" id="GO:0120103">
    <property type="term" value="C:centriolar subdistal appendage"/>
    <property type="evidence" value="ECO:0000266"/>
    <property type="project" value="RGD"/>
</dbReference>
<dbReference type="GO" id="GO:0005814">
    <property type="term" value="C:centriole"/>
    <property type="evidence" value="ECO:0000266"/>
    <property type="project" value="RGD"/>
</dbReference>
<dbReference type="GO" id="GO:0005813">
    <property type="term" value="C:centrosome"/>
    <property type="evidence" value="ECO:0000266"/>
    <property type="project" value="RGD"/>
</dbReference>
<dbReference type="GO" id="GO:0005737">
    <property type="term" value="C:cytoplasm"/>
    <property type="evidence" value="ECO:0000266"/>
    <property type="project" value="RGD"/>
</dbReference>
<dbReference type="GO" id="GO:0030425">
    <property type="term" value="C:dendrite"/>
    <property type="evidence" value="ECO:0007669"/>
    <property type="project" value="GOC"/>
</dbReference>
<dbReference type="GO" id="GO:0098982">
    <property type="term" value="C:GABA-ergic synapse"/>
    <property type="evidence" value="ECO:0000266"/>
    <property type="project" value="RGD"/>
</dbReference>
<dbReference type="GO" id="GO:0005871">
    <property type="term" value="C:kinesin complex"/>
    <property type="evidence" value="ECO:0000318"/>
    <property type="project" value="GO_Central"/>
</dbReference>
<dbReference type="GO" id="GO:0005874">
    <property type="term" value="C:microtubule"/>
    <property type="evidence" value="ECO:0000266"/>
    <property type="project" value="RGD"/>
</dbReference>
<dbReference type="GO" id="GO:0097228">
    <property type="term" value="C:sperm principal piece"/>
    <property type="evidence" value="ECO:0000266"/>
    <property type="project" value="RGD"/>
</dbReference>
<dbReference type="GO" id="GO:0005819">
    <property type="term" value="C:spindle"/>
    <property type="evidence" value="ECO:0000318"/>
    <property type="project" value="GO_Central"/>
</dbReference>
<dbReference type="GO" id="GO:0005876">
    <property type="term" value="C:spindle microtubule"/>
    <property type="evidence" value="ECO:0000266"/>
    <property type="project" value="RGD"/>
</dbReference>
<dbReference type="GO" id="GO:0000922">
    <property type="term" value="C:spindle pole"/>
    <property type="evidence" value="ECO:0000266"/>
    <property type="project" value="RGD"/>
</dbReference>
<dbReference type="GO" id="GO:0005524">
    <property type="term" value="F:ATP binding"/>
    <property type="evidence" value="ECO:0007669"/>
    <property type="project" value="UniProtKB-KW"/>
</dbReference>
<dbReference type="GO" id="GO:0016887">
    <property type="term" value="F:ATP hydrolysis activity"/>
    <property type="evidence" value="ECO:0000318"/>
    <property type="project" value="GO_Central"/>
</dbReference>
<dbReference type="GO" id="GO:0008017">
    <property type="term" value="F:microtubule binding"/>
    <property type="evidence" value="ECO:0000266"/>
    <property type="project" value="RGD"/>
</dbReference>
<dbReference type="GO" id="GO:0003777">
    <property type="term" value="F:microtubule motor activity"/>
    <property type="evidence" value="ECO:0000318"/>
    <property type="project" value="GO_Central"/>
</dbReference>
<dbReference type="GO" id="GO:0120283">
    <property type="term" value="F:protein serine/threonine kinase binding"/>
    <property type="evidence" value="ECO:0000353"/>
    <property type="project" value="ARUK-UCL"/>
</dbReference>
<dbReference type="GO" id="GO:0008089">
    <property type="term" value="P:anterograde axonal transport"/>
    <property type="evidence" value="ECO:0000314"/>
    <property type="project" value="SynGO"/>
</dbReference>
<dbReference type="GO" id="GO:0030154">
    <property type="term" value="P:cell differentiation"/>
    <property type="evidence" value="ECO:0007669"/>
    <property type="project" value="UniProtKB-KW"/>
</dbReference>
<dbReference type="GO" id="GO:0051301">
    <property type="term" value="P:cell division"/>
    <property type="evidence" value="ECO:0007669"/>
    <property type="project" value="UniProtKB-KW"/>
</dbReference>
<dbReference type="GO" id="GO:0098935">
    <property type="term" value="P:dendritic transport"/>
    <property type="evidence" value="ECO:0000266"/>
    <property type="project" value="RGD"/>
</dbReference>
<dbReference type="GO" id="GO:0000226">
    <property type="term" value="P:microtubule cytoskeleton organization"/>
    <property type="evidence" value="ECO:0000266"/>
    <property type="project" value="RGD"/>
</dbReference>
<dbReference type="GO" id="GO:0007018">
    <property type="term" value="P:microtubule-based movement"/>
    <property type="evidence" value="ECO:0000318"/>
    <property type="project" value="GO_Central"/>
</dbReference>
<dbReference type="GO" id="GO:0090307">
    <property type="term" value="P:mitotic spindle assembly"/>
    <property type="evidence" value="ECO:0000250"/>
    <property type="project" value="UniProtKB"/>
</dbReference>
<dbReference type="GO" id="GO:0007052">
    <property type="term" value="P:mitotic spindle organization"/>
    <property type="evidence" value="ECO:0000250"/>
    <property type="project" value="UniProtKB"/>
</dbReference>
<dbReference type="GO" id="GO:0007399">
    <property type="term" value="P:nervous system development"/>
    <property type="evidence" value="ECO:0007669"/>
    <property type="project" value="UniProtKB-KW"/>
</dbReference>
<dbReference type="GO" id="GO:0030334">
    <property type="term" value="P:regulation of cell migration"/>
    <property type="evidence" value="ECO:0000266"/>
    <property type="project" value="RGD"/>
</dbReference>
<dbReference type="CDD" id="cd01367">
    <property type="entry name" value="KISc_KIF2_like"/>
    <property type="match status" value="1"/>
</dbReference>
<dbReference type="FunFam" id="3.40.850.10:FF:000006">
    <property type="entry name" value="Kinesin-like protein"/>
    <property type="match status" value="1"/>
</dbReference>
<dbReference type="Gene3D" id="3.40.850.10">
    <property type="entry name" value="Kinesin motor domain"/>
    <property type="match status" value="1"/>
</dbReference>
<dbReference type="InterPro" id="IPR054473">
    <property type="entry name" value="KIF2A-like_N"/>
</dbReference>
<dbReference type="InterPro" id="IPR027640">
    <property type="entry name" value="Kinesin-like_fam"/>
</dbReference>
<dbReference type="InterPro" id="IPR019821">
    <property type="entry name" value="Kinesin_motor_CS"/>
</dbReference>
<dbReference type="InterPro" id="IPR001752">
    <property type="entry name" value="Kinesin_motor_dom"/>
</dbReference>
<dbReference type="InterPro" id="IPR036961">
    <property type="entry name" value="Kinesin_motor_dom_sf"/>
</dbReference>
<dbReference type="InterPro" id="IPR027417">
    <property type="entry name" value="P-loop_NTPase"/>
</dbReference>
<dbReference type="PANTHER" id="PTHR47971:SF24">
    <property type="entry name" value="KINESIN-LIKE PROTEIN"/>
    <property type="match status" value="1"/>
</dbReference>
<dbReference type="PANTHER" id="PTHR47971">
    <property type="entry name" value="KINESIN-RELATED PROTEIN 6"/>
    <property type="match status" value="1"/>
</dbReference>
<dbReference type="Pfam" id="PF22923">
    <property type="entry name" value="KIF2A-like_1st"/>
    <property type="match status" value="1"/>
</dbReference>
<dbReference type="Pfam" id="PF00225">
    <property type="entry name" value="Kinesin"/>
    <property type="match status" value="1"/>
</dbReference>
<dbReference type="PRINTS" id="PR00380">
    <property type="entry name" value="KINESINHEAVY"/>
</dbReference>
<dbReference type="SMART" id="SM00129">
    <property type="entry name" value="KISc"/>
    <property type="match status" value="1"/>
</dbReference>
<dbReference type="SUPFAM" id="SSF52540">
    <property type="entry name" value="P-loop containing nucleoside triphosphate hydrolases"/>
    <property type="match status" value="1"/>
</dbReference>
<dbReference type="PROSITE" id="PS00411">
    <property type="entry name" value="KINESIN_MOTOR_1"/>
    <property type="match status" value="1"/>
</dbReference>
<dbReference type="PROSITE" id="PS50067">
    <property type="entry name" value="KINESIN_MOTOR_2"/>
    <property type="match status" value="1"/>
</dbReference>
<feature type="chain" id="PRO_0000306273" description="Kinesin-like protein KIF2A">
    <location>
        <begin position="1"/>
        <end position="705"/>
    </location>
</feature>
<feature type="domain" description="Kinesin motor" evidence="5">
    <location>
        <begin position="222"/>
        <end position="552"/>
    </location>
</feature>
<feature type="region of interest" description="Disordered" evidence="6">
    <location>
        <begin position="65"/>
        <end position="185"/>
    </location>
</feature>
<feature type="coiled-coil region" evidence="4">
    <location>
        <begin position="153"/>
        <end position="186"/>
    </location>
</feature>
<feature type="coiled-coil region" evidence="4">
    <location>
        <begin position="659"/>
        <end position="698"/>
    </location>
</feature>
<feature type="compositionally biased region" description="Polar residues" evidence="6">
    <location>
        <begin position="122"/>
        <end position="139"/>
    </location>
</feature>
<feature type="compositionally biased region" description="Basic and acidic residues" evidence="6">
    <location>
        <begin position="158"/>
        <end position="185"/>
    </location>
</feature>
<feature type="binding site" evidence="5">
    <location>
        <begin position="312"/>
        <end position="319"/>
    </location>
    <ligand>
        <name>ATP</name>
        <dbReference type="ChEBI" id="CHEBI:30616"/>
    </ligand>
</feature>
<feature type="modified residue" description="Phosphoserine" evidence="15">
    <location>
        <position position="75"/>
    </location>
</feature>
<feature type="modified residue" description="Phosphothreonine" evidence="2">
    <location>
        <position position="96"/>
    </location>
</feature>
<feature type="modified residue" description="Phosphoserine" evidence="2">
    <location>
        <position position="99"/>
    </location>
</feature>
<feature type="modified residue" description="N6-acetyllysine" evidence="3">
    <location>
        <position position="101"/>
    </location>
</feature>
<feature type="modified residue" description="Phosphoserine" evidence="2">
    <location>
        <position position="134"/>
    </location>
</feature>
<feature type="modified residue" description="Phosphoserine" evidence="2">
    <location>
        <position position="139"/>
    </location>
</feature>
<feature type="splice variant" id="VSP_052553" description="In isoform 2." evidence="10">
    <original>E</original>
    <variation>EFGISPSDIPFSQGSGSRPDLSPSYDYDDFSPSITRVKE</variation>
    <location>
        <position position="551"/>
    </location>
</feature>
<feature type="modified residue" description="Phosphoserine" evidence="15">
    <location sequence="Q9WV63-2">
        <position position="572"/>
    </location>
</feature>
<organism>
    <name type="scientific">Rattus norvegicus</name>
    <name type="common">Rat</name>
    <dbReference type="NCBI Taxonomy" id="10116"/>
    <lineage>
        <taxon>Eukaryota</taxon>
        <taxon>Metazoa</taxon>
        <taxon>Chordata</taxon>
        <taxon>Craniata</taxon>
        <taxon>Vertebrata</taxon>
        <taxon>Euteleostomi</taxon>
        <taxon>Mammalia</taxon>
        <taxon>Eutheria</taxon>
        <taxon>Euarchontoglires</taxon>
        <taxon>Glires</taxon>
        <taxon>Rodentia</taxon>
        <taxon>Myomorpha</taxon>
        <taxon>Muroidea</taxon>
        <taxon>Muridae</taxon>
        <taxon>Murinae</taxon>
        <taxon>Rattus</taxon>
    </lineage>
</organism>
<keyword id="KW-0007">Acetylation</keyword>
<keyword id="KW-0025">Alternative splicing</keyword>
<keyword id="KW-0067">ATP-binding</keyword>
<keyword id="KW-0131">Cell cycle</keyword>
<keyword id="KW-0132">Cell division</keyword>
<keyword id="KW-0175">Coiled coil</keyword>
<keyword id="KW-0963">Cytoplasm</keyword>
<keyword id="KW-0206">Cytoskeleton</keyword>
<keyword id="KW-0217">Developmental protein</keyword>
<keyword id="KW-0221">Differentiation</keyword>
<keyword id="KW-0493">Microtubule</keyword>
<keyword id="KW-0498">Mitosis</keyword>
<keyword id="KW-0505">Motor protein</keyword>
<keyword id="KW-0524">Neurogenesis</keyword>
<keyword id="KW-0547">Nucleotide-binding</keyword>
<keyword id="KW-0597">Phosphoprotein</keyword>
<keyword id="KW-1185">Reference proteome</keyword>
<proteinExistence type="evidence at protein level"/>
<gene>
    <name evidence="2" type="primary">Kif2a</name>
    <name evidence="14" type="synonym">Kif2</name>
</gene>